<dbReference type="EMBL" id="AL035538">
    <property type="protein sequence ID" value="CAB37547.1"/>
    <property type="status" value="ALT_SEQ"/>
    <property type="molecule type" value="Genomic_DNA"/>
</dbReference>
<dbReference type="EMBL" id="AL161592">
    <property type="protein sequence ID" value="CAB80472.1"/>
    <property type="status" value="ALT_SEQ"/>
    <property type="molecule type" value="Genomic_DNA"/>
</dbReference>
<dbReference type="EMBL" id="CP002687">
    <property type="protein sequence ID" value="ANM67031.1"/>
    <property type="molecule type" value="Genomic_DNA"/>
</dbReference>
<dbReference type="PIR" id="T05634">
    <property type="entry name" value="T05634"/>
</dbReference>
<dbReference type="RefSeq" id="NP_001328886.1">
    <property type="nucleotide sequence ID" value="NM_001342474.1"/>
</dbReference>
<dbReference type="SMR" id="P0CB23"/>
<dbReference type="FunCoup" id="P0CB23">
    <property type="interactions" value="2198"/>
</dbReference>
<dbReference type="STRING" id="3702.P0CB23"/>
<dbReference type="PaxDb" id="3702-AT4G38070.1"/>
<dbReference type="ProteomicsDB" id="242828"/>
<dbReference type="EnsemblPlants" id="AT4G38062.1">
    <property type="protein sequence ID" value="AT4G38062.1"/>
    <property type="gene ID" value="AT4G38062"/>
</dbReference>
<dbReference type="GeneID" id="28720214"/>
<dbReference type="Gramene" id="AT4G38062.1">
    <property type="protein sequence ID" value="AT4G38062.1"/>
    <property type="gene ID" value="AT4G38062"/>
</dbReference>
<dbReference type="KEGG" id="ath:AT4G38062"/>
<dbReference type="Araport" id="AT4G38062"/>
<dbReference type="TAIR" id="AT4G38062"/>
<dbReference type="eggNOG" id="ENOG502QQVI">
    <property type="taxonomic scope" value="Eukaryota"/>
</dbReference>
<dbReference type="HOGENOM" id="CLU_248108_0_0_1"/>
<dbReference type="InParanoid" id="P0CB23"/>
<dbReference type="OMA" id="FELQIWR"/>
<dbReference type="PRO" id="PR:P0CB23"/>
<dbReference type="Proteomes" id="UP000006548">
    <property type="component" value="Chromosome 4"/>
</dbReference>
<dbReference type="ExpressionAtlas" id="P0CB23">
    <property type="expression patterns" value="baseline and differential"/>
</dbReference>
<dbReference type="Gene3D" id="1.10.287.1490">
    <property type="match status" value="1"/>
</dbReference>
<dbReference type="InterPro" id="IPR040262">
    <property type="entry name" value="At4g38062-like"/>
</dbReference>
<dbReference type="PANTHER" id="PTHR45287">
    <property type="entry name" value="OS03G0691500 PROTEIN"/>
    <property type="match status" value="1"/>
</dbReference>
<dbReference type="PANTHER" id="PTHR45287:SF4">
    <property type="entry name" value="OS03G0691500 PROTEIN"/>
    <property type="match status" value="1"/>
</dbReference>
<accession>P0CB23</accession>
<accession>F4JSX4</accession>
<accession>Q7XHI6</accession>
<accession>Q9SZK7</accession>
<feature type="chain" id="PRO_0000382176" description="Uncharacterized protein At4g38062">
    <location>
        <begin position="1"/>
        <end position="1050"/>
    </location>
</feature>
<feature type="coiled-coil region" evidence="1">
    <location>
        <begin position="1"/>
        <end position="420"/>
    </location>
</feature>
<feature type="coiled-coil region" evidence="1">
    <location>
        <begin position="463"/>
        <end position="627"/>
    </location>
</feature>
<feature type="coiled-coil region" evidence="1">
    <location>
        <begin position="692"/>
        <end position="981"/>
    </location>
</feature>
<keyword id="KW-0175">Coiled coil</keyword>
<keyword id="KW-1185">Reference proteome</keyword>
<sequence>MEKVYEELDEVKAVNEKLRIDYRNKTELLENLKKVQNEQLIEIREARLVNEKHGFEIEEKSREIAELKRANEELQRCLREKDSVVKRVNDVNDKLRANGEDKYREFEEEKRNMMSGLDEASEKNIDLEQKNNVYRAEIEGLKGLLAVAETKRIEAEKTVKGMKEMRGRDDVVVKMEEEKSQVEEKLKWKKEQFKHLEEAYEKLKNLFKDSKKEWEEEKSKLLDEIYSLQTKLDSVTRISEDLQKKLQMCNGALTQEETRRKHLEIQVSEFKAKYEDAFAECQDARTQLDDLAGKRDWEVAELRQTLSMKDAYFKEMKYENGKLEQENRELLGSLKELQEATIQGSGNSALSKLKNKFRNLENIHKNCSANLRSKEAEWSSQVEKMVEEINDYKLQLQSKEAALKEVELELENCRSSTAKMRLQYEEISIMFLVLSRTVSEAQSRLANAKDKQIKDEKREGNCYSLLMEQLDQKNAALAKAQMEIKEERESVACLLKRIEMLDLFENQNIQMQKEVERFKEMVEESSRFQTQMQEKMKEAENDYEEKLLQVCDALDNTNIDLVAEREKVVSLTRQIESLGTVKEKNLVMEKETQEYKEMLEESEKCRVLLEEQISQLESDSNENIRELCSKVDIAYAKLAEEVEKTASLVRKSESIDLNEEHRQRELDHYKEMLEESTKTQLLLQEKVVDVENDSKRKLADVSEALEIANSELSDKTSEVFQIEFQLWVWKSIAKRLKAELEQNQNLRKRVEASLLEQVGVGEAIKQEKNELVHKLKVISHARSSDSEKKESLMRDKDEMLESLQREVELLEQDSLRRELEDVVLAHMIGERELQNEREICALQQKDQDLCEVKHELEGSLKSVSLLLQQKQNEVNMLRKTWEKLTARQILTAVETESKKMMIIELEGEISSLSQKLETSNESVSCFRQEATKSRAELETKQTELKEVTTQMQEKLRTSEAEKTELVKEVASLSTEKRNLLSFISEMEDGMLKLYDGDTKLMKTLERVTQCCDGFGKENNNGETIGSPRLAMKHEEDVVTEDRSPFRPLNH</sequence>
<evidence type="ECO:0000255" key="1"/>
<evidence type="ECO:0000305" key="2"/>
<evidence type="ECO:0000312" key="3">
    <source>
        <dbReference type="Araport" id="AT4G38062"/>
    </source>
</evidence>
<evidence type="ECO:0000312" key="4">
    <source>
        <dbReference type="EMBL" id="CAB37547.1"/>
    </source>
</evidence>
<gene>
    <name evidence="3" type="ordered locus">At4g38062</name>
    <name evidence="4" type="ORF">F20D10.190</name>
</gene>
<protein>
    <recommendedName>
        <fullName>Uncharacterized protein At4g38062</fullName>
    </recommendedName>
</protein>
<name>Y4862_ARATH</name>
<reference key="1">
    <citation type="journal article" date="1999" name="Nature">
        <title>Sequence and analysis of chromosome 4 of the plant Arabidopsis thaliana.</title>
        <authorList>
            <person name="Mayer K.F.X."/>
            <person name="Schueller C."/>
            <person name="Wambutt R."/>
            <person name="Murphy G."/>
            <person name="Volckaert G."/>
            <person name="Pohl T."/>
            <person name="Duesterhoeft A."/>
            <person name="Stiekema W."/>
            <person name="Entian K.-D."/>
            <person name="Terryn N."/>
            <person name="Harris B."/>
            <person name="Ansorge W."/>
            <person name="Brandt P."/>
            <person name="Grivell L.A."/>
            <person name="Rieger M."/>
            <person name="Weichselgartner M."/>
            <person name="de Simone V."/>
            <person name="Obermaier B."/>
            <person name="Mache R."/>
            <person name="Mueller M."/>
            <person name="Kreis M."/>
            <person name="Delseny M."/>
            <person name="Puigdomenech P."/>
            <person name="Watson M."/>
            <person name="Schmidtheini T."/>
            <person name="Reichert B."/>
            <person name="Portetelle D."/>
            <person name="Perez-Alonso M."/>
            <person name="Boutry M."/>
            <person name="Bancroft I."/>
            <person name="Vos P."/>
            <person name="Hoheisel J."/>
            <person name="Zimmermann W."/>
            <person name="Wedler H."/>
            <person name="Ridley P."/>
            <person name="Langham S.-A."/>
            <person name="McCullagh B."/>
            <person name="Bilham L."/>
            <person name="Robben J."/>
            <person name="van der Schueren J."/>
            <person name="Grymonprez B."/>
            <person name="Chuang Y.-J."/>
            <person name="Vandenbussche F."/>
            <person name="Braeken M."/>
            <person name="Weltjens I."/>
            <person name="Voet M."/>
            <person name="Bastiaens I."/>
            <person name="Aert R."/>
            <person name="Defoor E."/>
            <person name="Weitzenegger T."/>
            <person name="Bothe G."/>
            <person name="Ramsperger U."/>
            <person name="Hilbert H."/>
            <person name="Braun M."/>
            <person name="Holzer E."/>
            <person name="Brandt A."/>
            <person name="Peters S."/>
            <person name="van Staveren M."/>
            <person name="Dirkse W."/>
            <person name="Mooijman P."/>
            <person name="Klein Lankhorst R."/>
            <person name="Rose M."/>
            <person name="Hauf J."/>
            <person name="Koetter P."/>
            <person name="Berneiser S."/>
            <person name="Hempel S."/>
            <person name="Feldpausch M."/>
            <person name="Lamberth S."/>
            <person name="Van den Daele H."/>
            <person name="De Keyser A."/>
            <person name="Buysshaert C."/>
            <person name="Gielen J."/>
            <person name="Villarroel R."/>
            <person name="De Clercq R."/>
            <person name="van Montagu M."/>
            <person name="Rogers J."/>
            <person name="Cronin A."/>
            <person name="Quail M.A."/>
            <person name="Bray-Allen S."/>
            <person name="Clark L."/>
            <person name="Doggett J."/>
            <person name="Hall S."/>
            <person name="Kay M."/>
            <person name="Lennard N."/>
            <person name="McLay K."/>
            <person name="Mayes R."/>
            <person name="Pettett A."/>
            <person name="Rajandream M.A."/>
            <person name="Lyne M."/>
            <person name="Benes V."/>
            <person name="Rechmann S."/>
            <person name="Borkova D."/>
            <person name="Bloecker H."/>
            <person name="Scharfe M."/>
            <person name="Grimm M."/>
            <person name="Loehnert T.-H."/>
            <person name="Dose S."/>
            <person name="de Haan M."/>
            <person name="Maarse A.C."/>
            <person name="Schaefer M."/>
            <person name="Mueller-Auer S."/>
            <person name="Gabel C."/>
            <person name="Fuchs M."/>
            <person name="Fartmann B."/>
            <person name="Granderath K."/>
            <person name="Dauner D."/>
            <person name="Herzl A."/>
            <person name="Neumann S."/>
            <person name="Argiriou A."/>
            <person name="Vitale D."/>
            <person name="Liguori R."/>
            <person name="Piravandi E."/>
            <person name="Massenet O."/>
            <person name="Quigley F."/>
            <person name="Clabauld G."/>
            <person name="Muendlein A."/>
            <person name="Felber R."/>
            <person name="Schnabl S."/>
            <person name="Hiller R."/>
            <person name="Schmidt W."/>
            <person name="Lecharny A."/>
            <person name="Aubourg S."/>
            <person name="Chefdor F."/>
            <person name="Cooke R."/>
            <person name="Berger C."/>
            <person name="Monfort A."/>
            <person name="Casacuberta E."/>
            <person name="Gibbons T."/>
            <person name="Weber N."/>
            <person name="Vandenbol M."/>
            <person name="Bargues M."/>
            <person name="Terol J."/>
            <person name="Torres A."/>
            <person name="Perez-Perez A."/>
            <person name="Purnelle B."/>
            <person name="Bent E."/>
            <person name="Johnson S."/>
            <person name="Tacon D."/>
            <person name="Jesse T."/>
            <person name="Heijnen L."/>
            <person name="Schwarz S."/>
            <person name="Scholler P."/>
            <person name="Heber S."/>
            <person name="Francs P."/>
            <person name="Bielke C."/>
            <person name="Frishman D."/>
            <person name="Haase D."/>
            <person name="Lemcke K."/>
            <person name="Mewes H.-W."/>
            <person name="Stocker S."/>
            <person name="Zaccaria P."/>
            <person name="Bevan M."/>
            <person name="Wilson R.K."/>
            <person name="de la Bastide M."/>
            <person name="Habermann K."/>
            <person name="Parnell L."/>
            <person name="Dedhia N."/>
            <person name="Gnoj L."/>
            <person name="Schutz K."/>
            <person name="Huang E."/>
            <person name="Spiegel L."/>
            <person name="Sekhon M."/>
            <person name="Murray J."/>
            <person name="Sheet P."/>
            <person name="Cordes M."/>
            <person name="Abu-Threideh J."/>
            <person name="Stoneking T."/>
            <person name="Kalicki J."/>
            <person name="Graves T."/>
            <person name="Harmon G."/>
            <person name="Edwards J."/>
            <person name="Latreille P."/>
            <person name="Courtney L."/>
            <person name="Cloud J."/>
            <person name="Abbott A."/>
            <person name="Scott K."/>
            <person name="Johnson D."/>
            <person name="Minx P."/>
            <person name="Bentley D."/>
            <person name="Fulton B."/>
            <person name="Miller N."/>
            <person name="Greco T."/>
            <person name="Kemp K."/>
            <person name="Kramer J."/>
            <person name="Fulton L."/>
            <person name="Mardis E."/>
            <person name="Dante M."/>
            <person name="Pepin K."/>
            <person name="Hillier L.W."/>
            <person name="Nelson J."/>
            <person name="Spieth J."/>
            <person name="Ryan E."/>
            <person name="Andrews S."/>
            <person name="Geisel C."/>
            <person name="Layman D."/>
            <person name="Du H."/>
            <person name="Ali J."/>
            <person name="Berghoff A."/>
            <person name="Jones K."/>
            <person name="Drone K."/>
            <person name="Cotton M."/>
            <person name="Joshu C."/>
            <person name="Antonoiu B."/>
            <person name="Zidanic M."/>
            <person name="Strong C."/>
            <person name="Sun H."/>
            <person name="Lamar B."/>
            <person name="Yordan C."/>
            <person name="Ma P."/>
            <person name="Zhong J."/>
            <person name="Preston R."/>
            <person name="Vil D."/>
            <person name="Shekher M."/>
            <person name="Matero A."/>
            <person name="Shah R."/>
            <person name="Swaby I.K."/>
            <person name="O'Shaughnessy A."/>
            <person name="Rodriguez M."/>
            <person name="Hoffman J."/>
            <person name="Till S."/>
            <person name="Granat S."/>
            <person name="Shohdy N."/>
            <person name="Hasegawa A."/>
            <person name="Hameed A."/>
            <person name="Lodhi M."/>
            <person name="Johnson A."/>
            <person name="Chen E."/>
            <person name="Marra M.A."/>
            <person name="Martienssen R."/>
            <person name="McCombie W.R."/>
        </authorList>
    </citation>
    <scope>NUCLEOTIDE SEQUENCE [LARGE SCALE GENOMIC DNA]</scope>
    <source>
        <strain>cv. Columbia</strain>
    </source>
</reference>
<reference key="2">
    <citation type="journal article" date="2017" name="Plant J.">
        <title>Araport11: a complete reannotation of the Arabidopsis thaliana reference genome.</title>
        <authorList>
            <person name="Cheng C.Y."/>
            <person name="Krishnakumar V."/>
            <person name="Chan A.P."/>
            <person name="Thibaud-Nissen F."/>
            <person name="Schobel S."/>
            <person name="Town C.D."/>
        </authorList>
    </citation>
    <scope>GENOME REANNOTATION</scope>
    <source>
        <strain>cv. Columbia</strain>
    </source>
</reference>
<comment type="sequence caution" evidence="2">
    <conflict type="erroneous gene model prediction">
        <sequence resource="EMBL-CDS" id="CAB37547"/>
    </conflict>
    <text>The predicted gene has been split into 3 genes: At4g38062, At4g38065 and At4g38070.</text>
</comment>
<comment type="sequence caution" evidence="2">
    <conflict type="erroneous gene model prediction">
        <sequence resource="EMBL-CDS" id="CAB80472"/>
    </conflict>
    <text>The predicted gene has been split into 3 genes: At4g38062, At4g38065 and At4g38070.</text>
</comment>
<organism>
    <name type="scientific">Arabidopsis thaliana</name>
    <name type="common">Mouse-ear cress</name>
    <dbReference type="NCBI Taxonomy" id="3702"/>
    <lineage>
        <taxon>Eukaryota</taxon>
        <taxon>Viridiplantae</taxon>
        <taxon>Streptophyta</taxon>
        <taxon>Embryophyta</taxon>
        <taxon>Tracheophyta</taxon>
        <taxon>Spermatophyta</taxon>
        <taxon>Magnoliopsida</taxon>
        <taxon>eudicotyledons</taxon>
        <taxon>Gunneridae</taxon>
        <taxon>Pentapetalae</taxon>
        <taxon>rosids</taxon>
        <taxon>malvids</taxon>
        <taxon>Brassicales</taxon>
        <taxon>Brassicaceae</taxon>
        <taxon>Camelineae</taxon>
        <taxon>Arabidopsis</taxon>
    </lineage>
</organism>
<proteinExistence type="predicted"/>